<protein>
    <recommendedName>
        <fullName evidence="1">L-seryl-tRNA(Sec) selenium transferase</fullName>
        <ecNumber evidence="1">2.9.1.1</ecNumber>
    </recommendedName>
    <alternativeName>
        <fullName evidence="1">Selenocysteine synthase</fullName>
        <shortName evidence="1">Sec synthase</shortName>
    </alternativeName>
    <alternativeName>
        <fullName evidence="1">Selenocysteinyl-tRNA(Sec) synthase</fullName>
    </alternativeName>
</protein>
<organism>
    <name type="scientific">Salmonella choleraesuis (strain SC-B67)</name>
    <dbReference type="NCBI Taxonomy" id="321314"/>
    <lineage>
        <taxon>Bacteria</taxon>
        <taxon>Pseudomonadati</taxon>
        <taxon>Pseudomonadota</taxon>
        <taxon>Gammaproteobacteria</taxon>
        <taxon>Enterobacterales</taxon>
        <taxon>Enterobacteriaceae</taxon>
        <taxon>Salmonella</taxon>
    </lineage>
</organism>
<reference key="1">
    <citation type="journal article" date="2005" name="Nucleic Acids Res.">
        <title>The genome sequence of Salmonella enterica serovar Choleraesuis, a highly invasive and resistant zoonotic pathogen.</title>
        <authorList>
            <person name="Chiu C.-H."/>
            <person name="Tang P."/>
            <person name="Chu C."/>
            <person name="Hu S."/>
            <person name="Bao Q."/>
            <person name="Yu J."/>
            <person name="Chou Y.-Y."/>
            <person name="Wang H.-S."/>
            <person name="Lee Y.-S."/>
        </authorList>
    </citation>
    <scope>NUCLEOTIDE SEQUENCE [LARGE SCALE GENOMIC DNA]</scope>
    <source>
        <strain>SC-B67</strain>
    </source>
</reference>
<evidence type="ECO:0000255" key="1">
    <source>
        <dbReference type="HAMAP-Rule" id="MF_00423"/>
    </source>
</evidence>
<gene>
    <name evidence="1" type="primary">selA</name>
    <name type="ordered locus">SCH_3607</name>
</gene>
<name>SELA_SALCH</name>
<proteinExistence type="inferred from homology"/>
<accession>Q57IE9</accession>
<comment type="function">
    <text evidence="1">Converts seryl-tRNA(Sec) to selenocysteinyl-tRNA(Sec) required for selenoprotein biosynthesis.</text>
</comment>
<comment type="catalytic activity">
    <reaction evidence="1">
        <text>L-seryl-tRNA(Sec) + selenophosphate + H(+) = L-selenocysteinyl-tRNA(Sec) + phosphate</text>
        <dbReference type="Rhea" id="RHEA:22728"/>
        <dbReference type="Rhea" id="RHEA-COMP:9742"/>
        <dbReference type="Rhea" id="RHEA-COMP:9743"/>
        <dbReference type="ChEBI" id="CHEBI:15378"/>
        <dbReference type="ChEBI" id="CHEBI:16144"/>
        <dbReference type="ChEBI" id="CHEBI:43474"/>
        <dbReference type="ChEBI" id="CHEBI:78533"/>
        <dbReference type="ChEBI" id="CHEBI:78573"/>
        <dbReference type="EC" id="2.9.1.1"/>
    </reaction>
</comment>
<comment type="cofactor">
    <cofactor evidence="1">
        <name>pyridoxal 5'-phosphate</name>
        <dbReference type="ChEBI" id="CHEBI:597326"/>
    </cofactor>
</comment>
<comment type="pathway">
    <text evidence="1">Aminoacyl-tRNA biosynthesis; selenocysteinyl-tRNA(Sec) biosynthesis; selenocysteinyl-tRNA(Sec) from L-seryl-tRNA(Sec) (bacterial route): step 1/1.</text>
</comment>
<comment type="subunit">
    <text evidence="1">Homodecamer; pentamer of dimers. Binds only one seryl-tRNA(Sec) per dimer.</text>
</comment>
<comment type="subcellular location">
    <subcellularLocation>
        <location evidence="1">Cytoplasm</location>
    </subcellularLocation>
</comment>
<comment type="similarity">
    <text evidence="1">Belongs to the SelA family.</text>
</comment>
<dbReference type="EC" id="2.9.1.1" evidence="1"/>
<dbReference type="EMBL" id="AE017220">
    <property type="protein sequence ID" value="AAX67513.1"/>
    <property type="molecule type" value="Genomic_DNA"/>
</dbReference>
<dbReference type="RefSeq" id="WP_000200188.1">
    <property type="nucleotide sequence ID" value="NC_006905.1"/>
</dbReference>
<dbReference type="SMR" id="Q57IE9"/>
<dbReference type="KEGG" id="sec:SCH_3607"/>
<dbReference type="HOGENOM" id="CLU_038142_1_0_6"/>
<dbReference type="UniPathway" id="UPA00906">
    <property type="reaction ID" value="UER00896"/>
</dbReference>
<dbReference type="Proteomes" id="UP000000538">
    <property type="component" value="Chromosome"/>
</dbReference>
<dbReference type="GO" id="GO:0005737">
    <property type="term" value="C:cytoplasm"/>
    <property type="evidence" value="ECO:0007669"/>
    <property type="project" value="UniProtKB-SubCell"/>
</dbReference>
<dbReference type="GO" id="GO:0004125">
    <property type="term" value="F:L-seryl-tRNA(Sec) selenium transferase activity"/>
    <property type="evidence" value="ECO:0007669"/>
    <property type="project" value="UniProtKB-UniRule"/>
</dbReference>
<dbReference type="GO" id="GO:0001717">
    <property type="term" value="P:conversion of seryl-tRNAsec to selenocys-tRNAsec"/>
    <property type="evidence" value="ECO:0007669"/>
    <property type="project" value="UniProtKB-UniRule"/>
</dbReference>
<dbReference type="GO" id="GO:0001514">
    <property type="term" value="P:selenocysteine incorporation"/>
    <property type="evidence" value="ECO:0007669"/>
    <property type="project" value="UniProtKB-UniRule"/>
</dbReference>
<dbReference type="FunFam" id="3.40.640.10:FF:000028">
    <property type="entry name" value="L-seryl-tRNA(Sec) selenium transferase"/>
    <property type="match status" value="1"/>
</dbReference>
<dbReference type="FunFam" id="3.90.1150.180:FF:000001">
    <property type="entry name" value="L-seryl-tRNA(Sec) selenium transferase"/>
    <property type="match status" value="1"/>
</dbReference>
<dbReference type="Gene3D" id="3.90.1150.180">
    <property type="match status" value="1"/>
</dbReference>
<dbReference type="Gene3D" id="3.40.640.10">
    <property type="entry name" value="Type I PLP-dependent aspartate aminotransferase-like (Major domain)"/>
    <property type="match status" value="1"/>
</dbReference>
<dbReference type="HAMAP" id="MF_00423">
    <property type="entry name" value="SelA"/>
    <property type="match status" value="1"/>
</dbReference>
<dbReference type="InterPro" id="IPR015424">
    <property type="entry name" value="PyrdxlP-dep_Trfase"/>
</dbReference>
<dbReference type="InterPro" id="IPR015421">
    <property type="entry name" value="PyrdxlP-dep_Trfase_major"/>
</dbReference>
<dbReference type="InterPro" id="IPR018319">
    <property type="entry name" value="SelA-like"/>
</dbReference>
<dbReference type="InterPro" id="IPR004534">
    <property type="entry name" value="SelA_trans"/>
</dbReference>
<dbReference type="InterPro" id="IPR025862">
    <property type="entry name" value="SelA_trans_N_dom"/>
</dbReference>
<dbReference type="NCBIfam" id="TIGR00474">
    <property type="entry name" value="selA"/>
    <property type="match status" value="1"/>
</dbReference>
<dbReference type="PANTHER" id="PTHR32328">
    <property type="entry name" value="L-SERYL-TRNA(SEC) SELENIUM TRANSFERASE"/>
    <property type="match status" value="1"/>
</dbReference>
<dbReference type="PANTHER" id="PTHR32328:SF0">
    <property type="entry name" value="L-SERYL-TRNA(SEC) SELENIUM TRANSFERASE"/>
    <property type="match status" value="1"/>
</dbReference>
<dbReference type="Pfam" id="PF12390">
    <property type="entry name" value="Se-cys_synth_N"/>
    <property type="match status" value="1"/>
</dbReference>
<dbReference type="Pfam" id="PF03841">
    <property type="entry name" value="SelA"/>
    <property type="match status" value="1"/>
</dbReference>
<dbReference type="SUPFAM" id="SSF53383">
    <property type="entry name" value="PLP-dependent transferases"/>
    <property type="match status" value="1"/>
</dbReference>
<keyword id="KW-0963">Cytoplasm</keyword>
<keyword id="KW-0648">Protein biosynthesis</keyword>
<keyword id="KW-0663">Pyridoxal phosphate</keyword>
<keyword id="KW-0711">Selenium</keyword>
<keyword id="KW-0808">Transferase</keyword>
<feature type="chain" id="PRO_1000050379" description="L-seryl-tRNA(Sec) selenium transferase">
    <location>
        <begin position="1"/>
        <end position="463"/>
    </location>
</feature>
<feature type="modified residue" description="N6-(pyridoxal phosphate)lysine" evidence="1">
    <location>
        <position position="295"/>
    </location>
</feature>
<sequence length="463" mass="50828">MTSETRTLYSQLPAIDRLLHDSAFLSLRDRYGHTQVVDLLRRMLDDARDVIRNTQTLPDWYADWAQEAKLRLENAAQSALRPVINLTGTVLHTNLGRALQAQEAIEAVTQAMRAPVTLEYDLDGAGRGHRDRALATLLCRITGAEDACIVNNNAAAVLLMLAATASGKEVVVSRGELVEIGGAFRIPDVMRQAGCTLHEVGTTNRTHAKDYRQAVNENTGLLMKVHTSNYSIEGFTKTVEEAELAEIGRELDIPVVADLGSGSLVDLSQYGLPKEPMPQQLIAAGVSLVSFSGDKLLGGPQAGIIVGKKAMIAQLQSHPLKRALRADKMTLAALEATLRLYLHPEALAEKLPTLRLLTRSEASIREQAQRLQARLAARYGDEFALEVKPCLSQIGSGSLPVDRLPSAAMTFTPHDGRGSRLEALAARWRTLPVPVIGRIYDGRLWLDMRCLEDESRFMEMMLK</sequence>